<reference key="1">
    <citation type="journal article" date="2009" name="Science">
        <title>Genome sequence, comparative analysis, and population genetics of the domestic horse.</title>
        <authorList>
            <person name="Wade C.M."/>
            <person name="Giulotto E."/>
            <person name="Sigurdsson S."/>
            <person name="Zoli M."/>
            <person name="Gnerre S."/>
            <person name="Imsland F."/>
            <person name="Lear T.L."/>
            <person name="Adelson D.L."/>
            <person name="Bailey E."/>
            <person name="Bellone R.R."/>
            <person name="Bloecker H."/>
            <person name="Distl O."/>
            <person name="Edgar R.C."/>
            <person name="Garber M."/>
            <person name="Leeb T."/>
            <person name="Mauceli E."/>
            <person name="MacLeod J.N."/>
            <person name="Penedo M.C.T."/>
            <person name="Raison J.M."/>
            <person name="Sharpe T."/>
            <person name="Vogel J."/>
            <person name="Andersson L."/>
            <person name="Antczak D.F."/>
            <person name="Biagi T."/>
            <person name="Binns M.M."/>
            <person name="Chowdhary B.P."/>
            <person name="Coleman S.J."/>
            <person name="Della Valle G."/>
            <person name="Fryc S."/>
            <person name="Guerin G."/>
            <person name="Hasegawa T."/>
            <person name="Hill E.W."/>
            <person name="Jurka J."/>
            <person name="Kiialainen A."/>
            <person name="Lindgren G."/>
            <person name="Liu J."/>
            <person name="Magnani E."/>
            <person name="Mickelson J.R."/>
            <person name="Murray J."/>
            <person name="Nergadze S.G."/>
            <person name="Onofrio R."/>
            <person name="Pedroni S."/>
            <person name="Piras M.F."/>
            <person name="Raudsepp T."/>
            <person name="Rocchi M."/>
            <person name="Roeed K.H."/>
            <person name="Ryder O.A."/>
            <person name="Searle S."/>
            <person name="Skow L."/>
            <person name="Swinburne J.E."/>
            <person name="Syvaenen A.C."/>
            <person name="Tozaki T."/>
            <person name="Valberg S.J."/>
            <person name="Vaudin M."/>
            <person name="White J.R."/>
            <person name="Zody M.C."/>
            <person name="Lander E.S."/>
            <person name="Lindblad-Toh K."/>
        </authorList>
    </citation>
    <scope>NUCLEOTIDE SEQUENCE [LARGE SCALE GENOMIC DNA]</scope>
    <source>
        <strain>Thoroughbred</strain>
    </source>
</reference>
<reference key="2">
    <citation type="journal article" date="2019" name="PLoS Genet.">
        <title>Unraveling the functional role of the orphan solute carrier, SLC22A24 in the transport of steroid conjugates through metabolomic and genome-wide association studies.</title>
        <authorList>
            <person name="Yee S.W."/>
            <person name="Stecula A."/>
            <person name="Chien H.C."/>
            <person name="Zou L."/>
            <person name="Feofanova E.V."/>
            <person name="van Borselen M."/>
            <person name="Cheung K.W.K."/>
            <person name="Yousri N.A."/>
            <person name="Suhre K."/>
            <person name="Kinchen J.M."/>
            <person name="Boerwinkle E."/>
            <person name="Irannejad R."/>
            <person name="Yu B."/>
            <person name="Giacomini K.M."/>
        </authorList>
    </citation>
    <scope>FUNCTION</scope>
    <scope>TRANSPORTER ACTIVITY</scope>
    <scope>SUBUNIT</scope>
</reference>
<name>S22AO_HORSE</name>
<sequence length="552" mass="61702">MAFQDLLDQVGSLGRFQILQTAFFCICILIAYPHMLLENFTAAVPGHRCWVHILDNDTVSANGTEILSQETLLRISIPLDSNLRPEKCRRFIHPQWQFLDLNGTFPNMSEPDTEPCVDGWVYDRSSFSSTIVTEWDLVCESQSLISVAQSLFMVAQLLGGLIFGHISDRFGRKIIFRCCLLLFAISGTCAAIAPTFPVYCSLRFLGGICLMNIITNAVSTMSEWTGPKSIALMTGIILNSCNIGQILMGGLGFVIQDWRTLQLTMSIPLFILFLFSRSVLESAQWLIITNQLDEALKELRRAAHINGKKDTGETLTIEFVKSTMKQELDEGQTNVSLFDLLRPPKLRVRIFYLSFVRFAATIPFLGLMLNLQHFGSNIFLFQIIFGAVTFIVRCAVLLTMNHVGRRISQMVSSFLVGIPILVNIFLSQEMQTLRVALATLGIGATTAIFTTHTVHHNELVPTVLRSIAIGLNAMFSRLGATLAPLLMILTVYSPDLPWIIYGVSSILAGLVVLLLPETRNQPLPNTIQDVENNRRDSRKTKQEDISMKVTQF</sequence>
<feature type="chain" id="PRO_0000456642" description="Steroid transmembrane transporter SLC22A24">
    <location>
        <begin position="1"/>
        <end position="552"/>
    </location>
</feature>
<feature type="transmembrane region" description="Helical" evidence="2">
    <location>
        <begin position="16"/>
        <end position="36"/>
    </location>
</feature>
<feature type="transmembrane region" description="Helical" evidence="2">
    <location>
        <begin position="144"/>
        <end position="164"/>
    </location>
</feature>
<feature type="transmembrane region" description="Helical" evidence="2">
    <location>
        <begin position="178"/>
        <end position="198"/>
    </location>
</feature>
<feature type="transmembrane region" description="Helical" evidence="2">
    <location>
        <begin position="204"/>
        <end position="224"/>
    </location>
</feature>
<feature type="transmembrane region" description="Helical" evidence="2">
    <location>
        <begin position="235"/>
        <end position="255"/>
    </location>
</feature>
<feature type="transmembrane region" description="Helical" evidence="2">
    <location>
        <begin position="267"/>
        <end position="287"/>
    </location>
</feature>
<feature type="transmembrane region" description="Helical" evidence="2">
    <location>
        <begin position="350"/>
        <end position="370"/>
    </location>
</feature>
<feature type="transmembrane region" description="Helical" evidence="2">
    <location>
        <begin position="378"/>
        <end position="398"/>
    </location>
</feature>
<feature type="transmembrane region" description="Helical" evidence="2">
    <location>
        <begin position="407"/>
        <end position="427"/>
    </location>
</feature>
<feature type="transmembrane region" description="Helical" evidence="2">
    <location>
        <begin position="435"/>
        <end position="455"/>
    </location>
</feature>
<feature type="transmembrane region" description="Helical" evidence="2">
    <location>
        <begin position="469"/>
        <end position="489"/>
    </location>
</feature>
<feature type="transmembrane region" description="Helical" evidence="2">
    <location>
        <begin position="496"/>
        <end position="516"/>
    </location>
</feature>
<feature type="region of interest" description="Disordered" evidence="3">
    <location>
        <begin position="524"/>
        <end position="552"/>
    </location>
</feature>
<feature type="compositionally biased region" description="Basic and acidic residues" evidence="3">
    <location>
        <begin position="531"/>
        <end position="546"/>
    </location>
</feature>
<evidence type="ECO:0000250" key="1">
    <source>
        <dbReference type="UniProtKB" id="Q8N4F4"/>
    </source>
</evidence>
<evidence type="ECO:0000255" key="2"/>
<evidence type="ECO:0000256" key="3">
    <source>
        <dbReference type="SAM" id="MobiDB-lite"/>
    </source>
</evidence>
<evidence type="ECO:0000269" key="4">
    <source>
    </source>
</evidence>
<evidence type="ECO:0000305" key="5"/>
<evidence type="ECO:0000305" key="6">
    <source>
    </source>
</evidence>
<evidence type="ECO:0000312" key="7">
    <source>
        <dbReference type="VGNC" id="VGNC:84548"/>
    </source>
</evidence>
<organism>
    <name type="scientific">Equus caballus</name>
    <name type="common">Horse</name>
    <dbReference type="NCBI Taxonomy" id="9796"/>
    <lineage>
        <taxon>Eukaryota</taxon>
        <taxon>Metazoa</taxon>
        <taxon>Chordata</taxon>
        <taxon>Craniata</taxon>
        <taxon>Vertebrata</taxon>
        <taxon>Euteleostomi</taxon>
        <taxon>Mammalia</taxon>
        <taxon>Eutheria</taxon>
        <taxon>Laurasiatheria</taxon>
        <taxon>Perissodactyla</taxon>
        <taxon>Equidae</taxon>
        <taxon>Equus</taxon>
    </lineage>
</organism>
<proteinExistence type="evidence at protein level"/>
<dbReference type="RefSeq" id="NP_001421617.1">
    <property type="nucleotide sequence ID" value="NM_001434688.2"/>
</dbReference>
<dbReference type="RefSeq" id="XP_001502995.1">
    <property type="nucleotide sequence ID" value="XM_001502945.2"/>
</dbReference>
<dbReference type="SMR" id="A0A3Q2IDB4"/>
<dbReference type="STRING" id="9796.ENSECAP00000046377"/>
<dbReference type="PaxDb" id="9796-ENSECAP00000046377"/>
<dbReference type="Ensembl" id="ENSECAT00000035578.3">
    <property type="protein sequence ID" value="ENSECAP00000046377.2"/>
    <property type="gene ID" value="ENSECAG00000013637.4"/>
</dbReference>
<dbReference type="GeneID" id="100060388"/>
<dbReference type="KEGG" id="ecb:100060388"/>
<dbReference type="CTD" id="283238"/>
<dbReference type="VGNC" id="VGNC:84548">
    <property type="gene designation" value="SLC22A24"/>
</dbReference>
<dbReference type="GeneTree" id="ENSGT00940000164763"/>
<dbReference type="InParanoid" id="A0A3Q2IDB4"/>
<dbReference type="OMA" id="ISQMLFT"/>
<dbReference type="OrthoDB" id="2544694at2759"/>
<dbReference type="Proteomes" id="UP000002281">
    <property type="component" value="Chromosome 12"/>
</dbReference>
<dbReference type="Bgee" id="ENSECAG00000013637">
    <property type="expression patterns" value="Expressed in adult mammalian kidney and 1 other cell type or tissue"/>
</dbReference>
<dbReference type="GO" id="GO:0005886">
    <property type="term" value="C:plasma membrane"/>
    <property type="evidence" value="ECO:0007669"/>
    <property type="project" value="UniProtKB-SubCell"/>
</dbReference>
<dbReference type="GO" id="GO:0022857">
    <property type="term" value="F:transmembrane transporter activity"/>
    <property type="evidence" value="ECO:0007669"/>
    <property type="project" value="InterPro"/>
</dbReference>
<dbReference type="GO" id="GO:0006811">
    <property type="term" value="P:monoatomic ion transport"/>
    <property type="evidence" value="ECO:0007669"/>
    <property type="project" value="UniProtKB-KW"/>
</dbReference>
<dbReference type="GO" id="GO:0015711">
    <property type="term" value="P:organic anion transport"/>
    <property type="evidence" value="ECO:0000318"/>
    <property type="project" value="GO_Central"/>
</dbReference>
<dbReference type="GO" id="GO:0008202">
    <property type="term" value="P:steroid metabolic process"/>
    <property type="evidence" value="ECO:0007669"/>
    <property type="project" value="UniProtKB-KW"/>
</dbReference>
<dbReference type="GO" id="GO:0035382">
    <property type="term" value="P:sterol transmembrane transport"/>
    <property type="evidence" value="ECO:0007669"/>
    <property type="project" value="Ensembl"/>
</dbReference>
<dbReference type="CDD" id="cd17374">
    <property type="entry name" value="MFS_OAT"/>
    <property type="match status" value="1"/>
</dbReference>
<dbReference type="FunFam" id="1.20.1250.20:FF:000023">
    <property type="entry name" value="Solute carrier family 22 member 6"/>
    <property type="match status" value="1"/>
</dbReference>
<dbReference type="Gene3D" id="1.20.1250.20">
    <property type="entry name" value="MFS general substrate transporter like domains"/>
    <property type="match status" value="1"/>
</dbReference>
<dbReference type="InterPro" id="IPR020846">
    <property type="entry name" value="MFS_dom"/>
</dbReference>
<dbReference type="InterPro" id="IPR005828">
    <property type="entry name" value="MFS_sugar_transport-like"/>
</dbReference>
<dbReference type="InterPro" id="IPR036259">
    <property type="entry name" value="MFS_trans_sf"/>
</dbReference>
<dbReference type="PANTHER" id="PTHR24064">
    <property type="entry name" value="SOLUTE CARRIER FAMILY 22 MEMBER"/>
    <property type="match status" value="1"/>
</dbReference>
<dbReference type="Pfam" id="PF00083">
    <property type="entry name" value="Sugar_tr"/>
    <property type="match status" value="1"/>
</dbReference>
<dbReference type="SUPFAM" id="SSF103473">
    <property type="entry name" value="MFS general substrate transporter"/>
    <property type="match status" value="1"/>
</dbReference>
<dbReference type="PROSITE" id="PS50850">
    <property type="entry name" value="MFS"/>
    <property type="match status" value="1"/>
</dbReference>
<protein>
    <recommendedName>
        <fullName>Steroid transmembrane transporter SLC22A24</fullName>
    </recommendedName>
    <alternativeName>
        <fullName evidence="7">Solute carrier family 22 member 24</fullName>
    </alternativeName>
</protein>
<comment type="function">
    <text evidence="1 4">Renal transmembrane organic anion/dicarboxylate exchanger that participates in the reabsorption of conjugated steroids, as well as bile acids, driven by an outward gradient of dicarboxylates such as glutarate or succinate (By similarity). Transports taurocholate, estrone 3-sulfate, and estradiol-17-glucuronide (17beta-estradiol 17-O-(beta-D-glucuronate)), but not androstanediol glucuronide (5alpha-androstane-3alpha,17beta-diol 3-O-(beta-D-glucuronate)) (PubMed:31553721).</text>
</comment>
<comment type="catalytic activity">
    <reaction evidence="6">
        <text>estrone 3-sulfate(out) + glutarate(in) = estrone 3-sulfate(in) + glutarate(out)</text>
        <dbReference type="Rhea" id="RHEA:72151"/>
        <dbReference type="ChEBI" id="CHEBI:30921"/>
        <dbReference type="ChEBI" id="CHEBI:60050"/>
    </reaction>
</comment>
<comment type="catalytic activity">
    <reaction evidence="6">
        <text>17beta-estradiol 17-O-(beta-D-glucuronate)(out) + glutarate(in) = 17beta-estradiol 17-O-(beta-D-glucuronate)(in) + glutarate(out)</text>
        <dbReference type="Rhea" id="RHEA:72155"/>
        <dbReference type="ChEBI" id="CHEBI:30921"/>
        <dbReference type="ChEBI" id="CHEBI:82961"/>
    </reaction>
</comment>
<comment type="catalytic activity">
    <reaction evidence="6">
        <text>taurocholate(out) + glutarate(in) = taurocholate(in) + glutarate(out)</text>
        <dbReference type="Rhea" id="RHEA:72159"/>
        <dbReference type="ChEBI" id="CHEBI:30921"/>
        <dbReference type="ChEBI" id="CHEBI:36257"/>
    </reaction>
</comment>
<comment type="catalytic activity">
    <reaction evidence="1">
        <text>glycocholate(out) + glutarate(in) = glycocholate(in) + glutarate(out)</text>
        <dbReference type="Rhea" id="RHEA:72351"/>
        <dbReference type="ChEBI" id="CHEBI:29746"/>
        <dbReference type="ChEBI" id="CHEBI:30921"/>
    </reaction>
</comment>
<comment type="catalytic activity">
    <reaction evidence="1">
        <text>dehydroepiandrosterone 3-sulfate(out) + glutarate(in) = dehydroepiandrosterone 3-sulfate(in) + glutarate(out)</text>
        <dbReference type="Rhea" id="RHEA:72355"/>
        <dbReference type="ChEBI" id="CHEBI:30921"/>
        <dbReference type="ChEBI" id="CHEBI:57905"/>
    </reaction>
</comment>
<comment type="catalytic activity">
    <reaction evidence="1">
        <text>glutarate(in) + succinate(out) = glutarate(out) + succinate(in)</text>
        <dbReference type="Rhea" id="RHEA:72359"/>
        <dbReference type="ChEBI" id="CHEBI:30031"/>
        <dbReference type="ChEBI" id="CHEBI:30921"/>
    </reaction>
</comment>
<comment type="subcellular location">
    <subcellularLocation>
        <location evidence="4">Cell membrane</location>
        <topology evidence="2">Multi-pass membrane protein</topology>
    </subcellularLocation>
</comment>
<comment type="similarity">
    <text evidence="5">Belongs to the major facilitator (TC 2.A.1) superfamily. Organic cation transporter (TC 2.A.1.19) family.</text>
</comment>
<gene>
    <name evidence="7" type="primary">SLC22A24</name>
</gene>
<accession>A0A3Q2IDB4</accession>
<keyword id="KW-1003">Cell membrane</keyword>
<keyword id="KW-0406">Ion transport</keyword>
<keyword id="KW-0443">Lipid metabolism</keyword>
<keyword id="KW-0445">Lipid transport</keyword>
<keyword id="KW-0472">Membrane</keyword>
<keyword id="KW-1185">Reference proteome</keyword>
<keyword id="KW-0753">Steroid metabolism</keyword>
<keyword id="KW-0812">Transmembrane</keyword>
<keyword id="KW-1133">Transmembrane helix</keyword>
<keyword id="KW-0813">Transport</keyword>